<keyword id="KW-0963">Cytoplasm</keyword>
<keyword id="KW-0489">Methyltransferase</keyword>
<keyword id="KW-0698">rRNA processing</keyword>
<keyword id="KW-0949">S-adenosyl-L-methionine</keyword>
<keyword id="KW-0808">Transferase</keyword>
<dbReference type="EC" id="2.1.1.166" evidence="1"/>
<dbReference type="EMBL" id="CP000627">
    <property type="protein sequence ID" value="ABQ20367.1"/>
    <property type="molecule type" value="Genomic_DNA"/>
</dbReference>
<dbReference type="EMBL" id="CP001235">
    <property type="protein sequence ID" value="ACP08671.1"/>
    <property type="molecule type" value="Genomic_DNA"/>
</dbReference>
<dbReference type="RefSeq" id="WP_000043220.1">
    <property type="nucleotide sequence ID" value="NZ_JAACZH010000006.1"/>
</dbReference>
<dbReference type="SMR" id="A5F937"/>
<dbReference type="GeneID" id="89515213"/>
<dbReference type="KEGG" id="vco:VC0395_A0165"/>
<dbReference type="KEGG" id="vcr:VC395_0653"/>
<dbReference type="PATRIC" id="fig|345073.21.peg.634"/>
<dbReference type="eggNOG" id="COG0293">
    <property type="taxonomic scope" value="Bacteria"/>
</dbReference>
<dbReference type="HOGENOM" id="CLU_009422_4_0_6"/>
<dbReference type="OrthoDB" id="9790080at2"/>
<dbReference type="Proteomes" id="UP000000249">
    <property type="component" value="Chromosome 2"/>
</dbReference>
<dbReference type="GO" id="GO:0005737">
    <property type="term" value="C:cytoplasm"/>
    <property type="evidence" value="ECO:0007669"/>
    <property type="project" value="UniProtKB-SubCell"/>
</dbReference>
<dbReference type="GO" id="GO:0008650">
    <property type="term" value="F:rRNA (uridine-2'-O-)-methyltransferase activity"/>
    <property type="evidence" value="ECO:0007669"/>
    <property type="project" value="UniProtKB-UniRule"/>
</dbReference>
<dbReference type="CDD" id="cd02440">
    <property type="entry name" value="AdoMet_MTases"/>
    <property type="match status" value="1"/>
</dbReference>
<dbReference type="FunFam" id="3.40.50.150:FF:000005">
    <property type="entry name" value="Ribosomal RNA large subunit methyltransferase E"/>
    <property type="match status" value="1"/>
</dbReference>
<dbReference type="Gene3D" id="3.40.50.150">
    <property type="entry name" value="Vaccinia Virus protein VP39"/>
    <property type="match status" value="1"/>
</dbReference>
<dbReference type="HAMAP" id="MF_01547">
    <property type="entry name" value="RNA_methyltr_E"/>
    <property type="match status" value="1"/>
</dbReference>
<dbReference type="InterPro" id="IPR050082">
    <property type="entry name" value="RNA_methyltr_RlmE"/>
</dbReference>
<dbReference type="InterPro" id="IPR002877">
    <property type="entry name" value="RNA_MeTrfase_FtsJ_dom"/>
</dbReference>
<dbReference type="InterPro" id="IPR015507">
    <property type="entry name" value="rRNA-MeTfrase_E"/>
</dbReference>
<dbReference type="InterPro" id="IPR029063">
    <property type="entry name" value="SAM-dependent_MTases_sf"/>
</dbReference>
<dbReference type="NCBIfam" id="NF008390">
    <property type="entry name" value="PRK11188.1"/>
    <property type="match status" value="1"/>
</dbReference>
<dbReference type="PANTHER" id="PTHR10920">
    <property type="entry name" value="RIBOSOMAL RNA METHYLTRANSFERASE"/>
    <property type="match status" value="1"/>
</dbReference>
<dbReference type="PANTHER" id="PTHR10920:SF18">
    <property type="entry name" value="RRNA METHYLTRANSFERASE 2, MITOCHONDRIAL"/>
    <property type="match status" value="1"/>
</dbReference>
<dbReference type="Pfam" id="PF01728">
    <property type="entry name" value="FtsJ"/>
    <property type="match status" value="1"/>
</dbReference>
<dbReference type="PIRSF" id="PIRSF005461">
    <property type="entry name" value="23S_rRNA_mtase"/>
    <property type="match status" value="1"/>
</dbReference>
<dbReference type="SUPFAM" id="SSF53335">
    <property type="entry name" value="S-adenosyl-L-methionine-dependent methyltransferases"/>
    <property type="match status" value="1"/>
</dbReference>
<comment type="function">
    <text evidence="1">Specifically methylates the uridine in position 2552 of 23S rRNA at the 2'-O position of the ribose in the fully assembled 50S ribosomal subunit.</text>
</comment>
<comment type="catalytic activity">
    <reaction evidence="1">
        <text>uridine(2552) in 23S rRNA + S-adenosyl-L-methionine = 2'-O-methyluridine(2552) in 23S rRNA + S-adenosyl-L-homocysteine + H(+)</text>
        <dbReference type="Rhea" id="RHEA:42720"/>
        <dbReference type="Rhea" id="RHEA-COMP:10202"/>
        <dbReference type="Rhea" id="RHEA-COMP:10203"/>
        <dbReference type="ChEBI" id="CHEBI:15378"/>
        <dbReference type="ChEBI" id="CHEBI:57856"/>
        <dbReference type="ChEBI" id="CHEBI:59789"/>
        <dbReference type="ChEBI" id="CHEBI:65315"/>
        <dbReference type="ChEBI" id="CHEBI:74478"/>
        <dbReference type="EC" id="2.1.1.166"/>
    </reaction>
</comment>
<comment type="subcellular location">
    <subcellularLocation>
        <location evidence="1">Cytoplasm</location>
    </subcellularLocation>
</comment>
<comment type="similarity">
    <text evidence="1">Belongs to the class I-like SAM-binding methyltransferase superfamily. RNA methyltransferase RlmE family.</text>
</comment>
<evidence type="ECO:0000255" key="1">
    <source>
        <dbReference type="HAMAP-Rule" id="MF_01547"/>
    </source>
</evidence>
<reference key="1">
    <citation type="submission" date="2007-03" db="EMBL/GenBank/DDBJ databases">
        <authorList>
            <person name="Heidelberg J."/>
        </authorList>
    </citation>
    <scope>NUCLEOTIDE SEQUENCE [LARGE SCALE GENOMIC DNA]</scope>
    <source>
        <strain>ATCC 39541 / Classical Ogawa 395 / O395</strain>
    </source>
</reference>
<reference key="2">
    <citation type="journal article" date="2008" name="PLoS ONE">
        <title>A recalibrated molecular clock and independent origins for the cholera pandemic clones.</title>
        <authorList>
            <person name="Feng L."/>
            <person name="Reeves P.R."/>
            <person name="Lan R."/>
            <person name="Ren Y."/>
            <person name="Gao C."/>
            <person name="Zhou Z."/>
            <person name="Ren Y."/>
            <person name="Cheng J."/>
            <person name="Wang W."/>
            <person name="Wang J."/>
            <person name="Qian W."/>
            <person name="Li D."/>
            <person name="Wang L."/>
        </authorList>
    </citation>
    <scope>NUCLEOTIDE SEQUENCE [LARGE SCALE GENOMIC DNA]</scope>
    <source>
        <strain>ATCC 39541 / Classical Ogawa 395 / O395</strain>
    </source>
</reference>
<accession>A5F937</accession>
<accession>C3LXU7</accession>
<proteinExistence type="inferred from homology"/>
<name>RLME_VIBC3</name>
<feature type="chain" id="PRO_1000087721" description="Ribosomal RNA large subunit methyltransferase E">
    <location>
        <begin position="1"/>
        <end position="209"/>
    </location>
</feature>
<feature type="active site" description="Proton acceptor" evidence="1">
    <location>
        <position position="164"/>
    </location>
</feature>
<feature type="binding site" evidence="1">
    <location>
        <position position="63"/>
    </location>
    <ligand>
        <name>S-adenosyl-L-methionine</name>
        <dbReference type="ChEBI" id="CHEBI:59789"/>
    </ligand>
</feature>
<feature type="binding site" evidence="1">
    <location>
        <position position="65"/>
    </location>
    <ligand>
        <name>S-adenosyl-L-methionine</name>
        <dbReference type="ChEBI" id="CHEBI:59789"/>
    </ligand>
</feature>
<feature type="binding site" evidence="1">
    <location>
        <position position="83"/>
    </location>
    <ligand>
        <name>S-adenosyl-L-methionine</name>
        <dbReference type="ChEBI" id="CHEBI:59789"/>
    </ligand>
</feature>
<feature type="binding site" evidence="1">
    <location>
        <position position="99"/>
    </location>
    <ligand>
        <name>S-adenosyl-L-methionine</name>
        <dbReference type="ChEBI" id="CHEBI:59789"/>
    </ligand>
</feature>
<feature type="binding site" evidence="1">
    <location>
        <position position="124"/>
    </location>
    <ligand>
        <name>S-adenosyl-L-methionine</name>
        <dbReference type="ChEBI" id="CHEBI:59789"/>
    </ligand>
</feature>
<gene>
    <name evidence="1" type="primary">rlmE</name>
    <name evidence="1" type="synonym">ftsJ</name>
    <name evidence="1" type="synonym">rrmJ</name>
    <name type="ordered locus">VC0395_A0165</name>
    <name type="ordered locus">VC395_0653</name>
</gene>
<organism>
    <name type="scientific">Vibrio cholerae serotype O1 (strain ATCC 39541 / Classical Ogawa 395 / O395)</name>
    <dbReference type="NCBI Taxonomy" id="345073"/>
    <lineage>
        <taxon>Bacteria</taxon>
        <taxon>Pseudomonadati</taxon>
        <taxon>Pseudomonadota</taxon>
        <taxon>Gammaproteobacteria</taxon>
        <taxon>Vibrionales</taxon>
        <taxon>Vibrionaceae</taxon>
        <taxon>Vibrio</taxon>
    </lineage>
</organism>
<protein>
    <recommendedName>
        <fullName evidence="1">Ribosomal RNA large subunit methyltransferase E</fullName>
        <ecNumber evidence="1">2.1.1.166</ecNumber>
    </recommendedName>
    <alternativeName>
        <fullName evidence="1">23S rRNA Um2552 methyltransferase</fullName>
    </alternativeName>
    <alternativeName>
        <fullName evidence="1">rRNA (uridine-2'-O-)-methyltransferase</fullName>
    </alternativeName>
</protein>
<sequence length="209" mass="23197">MSKQKHSASSTRWLKEHFDDKYVNEAKKKGYRSRAIFKIEEIQNKDKLLKAGMTVVDLGAAPGGWSQFAAKVVGEGGRVIACDLLPMESIAGVSFLQGDFREEAVLNALLDRIQPDMVDVVMSDMAPNMAGNLSVDQPRAMYLVELALDMCRQVLAPNGSFVVKVFQGEGFDDYVKAVRDLFKVVKIRKPDSSRSRSREVFIVATGYKG</sequence>